<sequence length="149" mass="15638">MFGLKVKNAEADTAKSNEKLQGAEATGSSTTSGSGQSTQRGGSSGDTKVKALQVAVKKKSGSQGNSGDQGTEQVELESNDLANAPIKRGSNPASPTQGSRLRHHPIQFGIWSIRHPHPLKAVACDRANSQGPPQMIRLDPHSVRCALCL</sequence>
<keyword id="KW-1185">Reference proteome</keyword>
<evidence type="ECO:0000256" key="1">
    <source>
        <dbReference type="SAM" id="MobiDB-lite"/>
    </source>
</evidence>
<evidence type="ECO:0000305" key="2"/>
<organism>
    <name type="scientific">Mycoplasma pneumoniae (strain ATCC 29342 / M129 / Subtype 1)</name>
    <name type="common">Mycoplasmoides pneumoniae</name>
    <dbReference type="NCBI Taxonomy" id="272634"/>
    <lineage>
        <taxon>Bacteria</taxon>
        <taxon>Bacillati</taxon>
        <taxon>Mycoplasmatota</taxon>
        <taxon>Mycoplasmoidales</taxon>
        <taxon>Mycoplasmoidaceae</taxon>
        <taxon>Mycoplasmoides</taxon>
    </lineage>
</organism>
<dbReference type="EMBL" id="U00089">
    <property type="protein sequence ID" value="AAB95674.1"/>
    <property type="molecule type" value="Genomic_DNA"/>
</dbReference>
<dbReference type="PIR" id="S73352">
    <property type="entry name" value="S73352"/>
</dbReference>
<dbReference type="EnsemblBacteria" id="AAB95674">
    <property type="protein sequence ID" value="AAB95674"/>
    <property type="gene ID" value="MPN_128"/>
</dbReference>
<dbReference type="KEGG" id="mpn:MPN_128"/>
<dbReference type="HOGENOM" id="CLU_1747633_0_0_14"/>
<dbReference type="Proteomes" id="UP000000808">
    <property type="component" value="Chromosome"/>
</dbReference>
<feature type="chain" id="PRO_0000210651" description="Uncharacterized protein MPN_128">
    <location>
        <begin position="1"/>
        <end position="149"/>
    </location>
</feature>
<feature type="region of interest" description="Disordered" evidence="1">
    <location>
        <begin position="1"/>
        <end position="103"/>
    </location>
</feature>
<feature type="compositionally biased region" description="Basic and acidic residues" evidence="1">
    <location>
        <begin position="7"/>
        <end position="18"/>
    </location>
</feature>
<feature type="compositionally biased region" description="Low complexity" evidence="1">
    <location>
        <begin position="26"/>
        <end position="41"/>
    </location>
</feature>
<feature type="compositionally biased region" description="Polar residues" evidence="1">
    <location>
        <begin position="61"/>
        <end position="72"/>
    </location>
</feature>
<accession>P75347</accession>
<reference key="1">
    <citation type="journal article" date="1996" name="Nucleic Acids Res.">
        <title>Complete sequence analysis of the genome of the bacterium Mycoplasma pneumoniae.</title>
        <authorList>
            <person name="Himmelreich R."/>
            <person name="Hilbert H."/>
            <person name="Plagens H."/>
            <person name="Pirkl E."/>
            <person name="Li B.-C."/>
            <person name="Herrmann R."/>
        </authorList>
    </citation>
    <scope>NUCLEOTIDE SEQUENCE [LARGE SCALE GENOMIC DNA]</scope>
    <source>
        <strain>ATCC 29342 / M129 / Subtype 1</strain>
    </source>
</reference>
<gene>
    <name type="ordered locus">MPN_128</name>
    <name type="ORF">C09_ORF149a</name>
    <name type="ORF">MP026</name>
</gene>
<proteinExistence type="inferred from homology"/>
<name>Y128_MYCPN</name>
<protein>
    <recommendedName>
        <fullName>Uncharacterized protein MPN_128</fullName>
    </recommendedName>
</protein>
<comment type="similarity">
    <text evidence="2">Belongs to the adhesin P1 family.</text>
</comment>